<organism>
    <name type="scientific">Xylella fastidiosa (strain M12)</name>
    <dbReference type="NCBI Taxonomy" id="405440"/>
    <lineage>
        <taxon>Bacteria</taxon>
        <taxon>Pseudomonadati</taxon>
        <taxon>Pseudomonadota</taxon>
        <taxon>Gammaproteobacteria</taxon>
        <taxon>Lysobacterales</taxon>
        <taxon>Lysobacteraceae</taxon>
        <taxon>Xylella</taxon>
    </lineage>
</organism>
<dbReference type="EC" id="6.1.1.3" evidence="1"/>
<dbReference type="EMBL" id="CP000941">
    <property type="protein sequence ID" value="ACA12961.1"/>
    <property type="molecule type" value="Genomic_DNA"/>
</dbReference>
<dbReference type="RefSeq" id="WP_004084578.1">
    <property type="nucleotide sequence ID" value="NC_010513.1"/>
</dbReference>
<dbReference type="SMR" id="B0U5E3"/>
<dbReference type="KEGG" id="xfm:Xfasm12_2099"/>
<dbReference type="HOGENOM" id="CLU_008554_0_1_6"/>
<dbReference type="GO" id="GO:0005829">
    <property type="term" value="C:cytosol"/>
    <property type="evidence" value="ECO:0007669"/>
    <property type="project" value="TreeGrafter"/>
</dbReference>
<dbReference type="GO" id="GO:0005524">
    <property type="term" value="F:ATP binding"/>
    <property type="evidence" value="ECO:0007669"/>
    <property type="project" value="UniProtKB-UniRule"/>
</dbReference>
<dbReference type="GO" id="GO:0046872">
    <property type="term" value="F:metal ion binding"/>
    <property type="evidence" value="ECO:0007669"/>
    <property type="project" value="UniProtKB-KW"/>
</dbReference>
<dbReference type="GO" id="GO:0004829">
    <property type="term" value="F:threonine-tRNA ligase activity"/>
    <property type="evidence" value="ECO:0007669"/>
    <property type="project" value="UniProtKB-UniRule"/>
</dbReference>
<dbReference type="GO" id="GO:0000049">
    <property type="term" value="F:tRNA binding"/>
    <property type="evidence" value="ECO:0007669"/>
    <property type="project" value="UniProtKB-KW"/>
</dbReference>
<dbReference type="GO" id="GO:0006435">
    <property type="term" value="P:threonyl-tRNA aminoacylation"/>
    <property type="evidence" value="ECO:0007669"/>
    <property type="project" value="UniProtKB-UniRule"/>
</dbReference>
<dbReference type="CDD" id="cd01667">
    <property type="entry name" value="TGS_ThrRS"/>
    <property type="match status" value="1"/>
</dbReference>
<dbReference type="CDD" id="cd00860">
    <property type="entry name" value="ThrRS_anticodon"/>
    <property type="match status" value="1"/>
</dbReference>
<dbReference type="CDD" id="cd00771">
    <property type="entry name" value="ThrRS_core"/>
    <property type="match status" value="1"/>
</dbReference>
<dbReference type="FunFam" id="3.10.20.30:FF:000005">
    <property type="entry name" value="Threonine--tRNA ligase"/>
    <property type="match status" value="1"/>
</dbReference>
<dbReference type="FunFam" id="3.30.54.20:FF:000002">
    <property type="entry name" value="Threonine--tRNA ligase"/>
    <property type="match status" value="1"/>
</dbReference>
<dbReference type="FunFam" id="3.30.930.10:FF:000002">
    <property type="entry name" value="Threonine--tRNA ligase"/>
    <property type="match status" value="1"/>
</dbReference>
<dbReference type="FunFam" id="3.40.50.800:FF:000001">
    <property type="entry name" value="Threonine--tRNA ligase"/>
    <property type="match status" value="1"/>
</dbReference>
<dbReference type="FunFam" id="3.30.980.10:FF:000005">
    <property type="entry name" value="Threonyl-tRNA synthetase, mitochondrial"/>
    <property type="match status" value="1"/>
</dbReference>
<dbReference type="Gene3D" id="3.10.20.30">
    <property type="match status" value="1"/>
</dbReference>
<dbReference type="Gene3D" id="3.30.54.20">
    <property type="match status" value="1"/>
</dbReference>
<dbReference type="Gene3D" id="3.40.50.800">
    <property type="entry name" value="Anticodon-binding domain"/>
    <property type="match status" value="1"/>
</dbReference>
<dbReference type="Gene3D" id="3.30.930.10">
    <property type="entry name" value="Bira Bifunctional Protein, Domain 2"/>
    <property type="match status" value="1"/>
</dbReference>
<dbReference type="Gene3D" id="3.30.980.10">
    <property type="entry name" value="Threonyl-trna Synthetase, Chain A, domain 2"/>
    <property type="match status" value="1"/>
</dbReference>
<dbReference type="HAMAP" id="MF_00184">
    <property type="entry name" value="Thr_tRNA_synth"/>
    <property type="match status" value="1"/>
</dbReference>
<dbReference type="InterPro" id="IPR002314">
    <property type="entry name" value="aa-tRNA-synt_IIb"/>
</dbReference>
<dbReference type="InterPro" id="IPR006195">
    <property type="entry name" value="aa-tRNA-synth_II"/>
</dbReference>
<dbReference type="InterPro" id="IPR045864">
    <property type="entry name" value="aa-tRNA-synth_II/BPL/LPL"/>
</dbReference>
<dbReference type="InterPro" id="IPR004154">
    <property type="entry name" value="Anticodon-bd"/>
</dbReference>
<dbReference type="InterPro" id="IPR036621">
    <property type="entry name" value="Anticodon-bd_dom_sf"/>
</dbReference>
<dbReference type="InterPro" id="IPR012675">
    <property type="entry name" value="Beta-grasp_dom_sf"/>
</dbReference>
<dbReference type="InterPro" id="IPR004095">
    <property type="entry name" value="TGS"/>
</dbReference>
<dbReference type="InterPro" id="IPR012676">
    <property type="entry name" value="TGS-like"/>
</dbReference>
<dbReference type="InterPro" id="IPR002320">
    <property type="entry name" value="Thr-tRNA-ligase_IIa"/>
</dbReference>
<dbReference type="InterPro" id="IPR018163">
    <property type="entry name" value="Thr/Ala-tRNA-synth_IIc_edit"/>
</dbReference>
<dbReference type="InterPro" id="IPR047246">
    <property type="entry name" value="ThrRS_anticodon"/>
</dbReference>
<dbReference type="InterPro" id="IPR033728">
    <property type="entry name" value="ThrRS_core"/>
</dbReference>
<dbReference type="InterPro" id="IPR012947">
    <property type="entry name" value="tRNA_SAD"/>
</dbReference>
<dbReference type="NCBIfam" id="TIGR00418">
    <property type="entry name" value="thrS"/>
    <property type="match status" value="1"/>
</dbReference>
<dbReference type="PANTHER" id="PTHR11451:SF44">
    <property type="entry name" value="THREONINE--TRNA LIGASE, CHLOROPLASTIC_MITOCHONDRIAL 2"/>
    <property type="match status" value="1"/>
</dbReference>
<dbReference type="PANTHER" id="PTHR11451">
    <property type="entry name" value="THREONINE-TRNA LIGASE"/>
    <property type="match status" value="1"/>
</dbReference>
<dbReference type="Pfam" id="PF03129">
    <property type="entry name" value="HGTP_anticodon"/>
    <property type="match status" value="1"/>
</dbReference>
<dbReference type="Pfam" id="PF02824">
    <property type="entry name" value="TGS"/>
    <property type="match status" value="1"/>
</dbReference>
<dbReference type="Pfam" id="PF00587">
    <property type="entry name" value="tRNA-synt_2b"/>
    <property type="match status" value="1"/>
</dbReference>
<dbReference type="Pfam" id="PF07973">
    <property type="entry name" value="tRNA_SAD"/>
    <property type="match status" value="1"/>
</dbReference>
<dbReference type="PRINTS" id="PR01047">
    <property type="entry name" value="TRNASYNTHTHR"/>
</dbReference>
<dbReference type="SMART" id="SM00863">
    <property type="entry name" value="tRNA_SAD"/>
    <property type="match status" value="1"/>
</dbReference>
<dbReference type="SUPFAM" id="SSF52954">
    <property type="entry name" value="Class II aaRS ABD-related"/>
    <property type="match status" value="1"/>
</dbReference>
<dbReference type="SUPFAM" id="SSF55681">
    <property type="entry name" value="Class II aaRS and biotin synthetases"/>
    <property type="match status" value="1"/>
</dbReference>
<dbReference type="SUPFAM" id="SSF81271">
    <property type="entry name" value="TGS-like"/>
    <property type="match status" value="1"/>
</dbReference>
<dbReference type="SUPFAM" id="SSF55186">
    <property type="entry name" value="ThrRS/AlaRS common domain"/>
    <property type="match status" value="1"/>
</dbReference>
<dbReference type="PROSITE" id="PS50862">
    <property type="entry name" value="AA_TRNA_LIGASE_II"/>
    <property type="match status" value="1"/>
</dbReference>
<dbReference type="PROSITE" id="PS51880">
    <property type="entry name" value="TGS"/>
    <property type="match status" value="1"/>
</dbReference>
<accession>B0U5E3</accession>
<protein>
    <recommendedName>
        <fullName evidence="1">Threonine--tRNA ligase</fullName>
        <ecNumber evidence="1">6.1.1.3</ecNumber>
    </recommendedName>
    <alternativeName>
        <fullName evidence="1">Threonyl-tRNA synthetase</fullName>
        <shortName evidence="1">ThrRS</shortName>
    </alternativeName>
</protein>
<name>SYT_XYLFM</name>
<proteinExistence type="inferred from homology"/>
<comment type="function">
    <text evidence="1">Catalyzes the attachment of threonine to tRNA(Thr) in a two-step reaction: L-threonine is first activated by ATP to form Thr-AMP and then transferred to the acceptor end of tRNA(Thr). Also edits incorrectly charged L-seryl-tRNA(Thr).</text>
</comment>
<comment type="catalytic activity">
    <reaction evidence="1">
        <text>tRNA(Thr) + L-threonine + ATP = L-threonyl-tRNA(Thr) + AMP + diphosphate + H(+)</text>
        <dbReference type="Rhea" id="RHEA:24624"/>
        <dbReference type="Rhea" id="RHEA-COMP:9670"/>
        <dbReference type="Rhea" id="RHEA-COMP:9704"/>
        <dbReference type="ChEBI" id="CHEBI:15378"/>
        <dbReference type="ChEBI" id="CHEBI:30616"/>
        <dbReference type="ChEBI" id="CHEBI:33019"/>
        <dbReference type="ChEBI" id="CHEBI:57926"/>
        <dbReference type="ChEBI" id="CHEBI:78442"/>
        <dbReference type="ChEBI" id="CHEBI:78534"/>
        <dbReference type="ChEBI" id="CHEBI:456215"/>
        <dbReference type="EC" id="6.1.1.3"/>
    </reaction>
</comment>
<comment type="cofactor">
    <cofactor evidence="1">
        <name>Zn(2+)</name>
        <dbReference type="ChEBI" id="CHEBI:29105"/>
    </cofactor>
    <text evidence="1">Binds 1 zinc ion per subunit.</text>
</comment>
<comment type="subunit">
    <text evidence="1">Homodimer.</text>
</comment>
<comment type="subcellular location">
    <subcellularLocation>
        <location evidence="1">Cytoplasm</location>
    </subcellularLocation>
</comment>
<comment type="similarity">
    <text evidence="1">Belongs to the class-II aminoacyl-tRNA synthetase family.</text>
</comment>
<reference key="1">
    <citation type="journal article" date="2010" name="J. Bacteriol.">
        <title>Whole genome sequences of two Xylella fastidiosa strains (M12 and M23) causing almond leaf scorch disease in California.</title>
        <authorList>
            <person name="Chen J."/>
            <person name="Xie G."/>
            <person name="Han S."/>
            <person name="Chertkov O."/>
            <person name="Sims D."/>
            <person name="Civerolo E.L."/>
        </authorList>
    </citation>
    <scope>NUCLEOTIDE SEQUENCE [LARGE SCALE GENOMIC DNA]</scope>
    <source>
        <strain>M12</strain>
    </source>
</reference>
<evidence type="ECO:0000255" key="1">
    <source>
        <dbReference type="HAMAP-Rule" id="MF_00184"/>
    </source>
</evidence>
<evidence type="ECO:0000255" key="2">
    <source>
        <dbReference type="PROSITE-ProRule" id="PRU01228"/>
    </source>
</evidence>
<sequence length="635" mass="72770">MITITLPDGSRREFEGPVSVMQVAHAIGPGLAKATIAGQIDGGHLVDASDLIEHDAILRIITPEDQEALEIIRHSCAHLVGHAVKQLYPEAKMVIGPVIADGFYYDIYSKRPFTPEDLAAIEQRMVELIAQDYDVVKHITARHDVVRLFKERGEDYKLRLIEDMGPEVTAMGIYHHQEYVDMCRGPHVPNTRFLKAFRLTRISGAYWRGDTKNEQLQRIYGTAWADKKQLEAYMQRLQDAEKRDHRKIGKAQDLFHLQEEGPGLVFWHPKGWVIWQTIENYIRRVYRNSGYGELRCPQILDVSLWQKSGHWDNYKENMFFTDSEKRTYAVKPMNCPGHVQVFNQGLHSYRDLPIRYGEFGACHRNEPSGALHGLLRVRGFTQDDGHIFCTEAQIEAEVTAFHRQALQVYADFGFENIQIKIALRPDKRLGDSLSWDKAEAALRAALSACEVEWQELPGEGAFYGPKIEYHLKDAIGRTWQLGTIQVDFMMPGRLGAEYVDERSQRRHPVMLHRAIVGSMERFIGILIEHYAGIWPTWLAPVQVVIANITDAQYEYAEQVHKALLNQGFRVNIDLRNEKIGYKIREHTLQRVPYLLVVGDREKENGTVAVRTCSREDLGAMSISAFVERLQTEQVV</sequence>
<keyword id="KW-0030">Aminoacyl-tRNA synthetase</keyword>
<keyword id="KW-0067">ATP-binding</keyword>
<keyword id="KW-0963">Cytoplasm</keyword>
<keyword id="KW-0436">Ligase</keyword>
<keyword id="KW-0479">Metal-binding</keyword>
<keyword id="KW-0547">Nucleotide-binding</keyword>
<keyword id="KW-0648">Protein biosynthesis</keyword>
<keyword id="KW-0694">RNA-binding</keyword>
<keyword id="KW-0820">tRNA-binding</keyword>
<keyword id="KW-0862">Zinc</keyword>
<feature type="chain" id="PRO_1000098630" description="Threonine--tRNA ligase">
    <location>
        <begin position="1"/>
        <end position="635"/>
    </location>
</feature>
<feature type="domain" description="TGS" evidence="2">
    <location>
        <begin position="1"/>
        <end position="62"/>
    </location>
</feature>
<feature type="region of interest" description="Catalytic" evidence="1">
    <location>
        <begin position="244"/>
        <end position="535"/>
    </location>
</feature>
<feature type="binding site" evidence="1">
    <location>
        <position position="335"/>
    </location>
    <ligand>
        <name>Zn(2+)</name>
        <dbReference type="ChEBI" id="CHEBI:29105"/>
    </ligand>
</feature>
<feature type="binding site" evidence="1">
    <location>
        <position position="386"/>
    </location>
    <ligand>
        <name>Zn(2+)</name>
        <dbReference type="ChEBI" id="CHEBI:29105"/>
    </ligand>
</feature>
<feature type="binding site" evidence="1">
    <location>
        <position position="512"/>
    </location>
    <ligand>
        <name>Zn(2+)</name>
        <dbReference type="ChEBI" id="CHEBI:29105"/>
    </ligand>
</feature>
<gene>
    <name evidence="1" type="primary">thrS</name>
    <name type="ordered locus">Xfasm12_2099</name>
</gene>